<accession>Q9K0L7</accession>
<organism>
    <name type="scientific">Neisseria meningitidis serogroup B (strain ATCC BAA-335 / MC58)</name>
    <dbReference type="NCBI Taxonomy" id="122586"/>
    <lineage>
        <taxon>Bacteria</taxon>
        <taxon>Pseudomonadati</taxon>
        <taxon>Pseudomonadota</taxon>
        <taxon>Betaproteobacteria</taxon>
        <taxon>Neisseriales</taxon>
        <taxon>Neisseriaceae</taxon>
        <taxon>Neisseria</taxon>
    </lineage>
</organism>
<evidence type="ECO:0000255" key="1">
    <source>
        <dbReference type="HAMAP-Rule" id="MF_00272"/>
    </source>
</evidence>
<evidence type="ECO:0000255" key="2">
    <source>
        <dbReference type="PROSITE-ProRule" id="PRU01066"/>
    </source>
</evidence>
<sequence length="128" mass="13643">MSNNIPAELKYVASHEWLRLEEDGTITVGITHHAQELLGDIVFVELPEVGANLAAEEQAGVVESVKAASDVYAPIAGEVVAVNEDLPSAPETANSDPYGAGWFFKLKPANVADYDSLLTAEQYAGEVD</sequence>
<protein>
    <recommendedName>
        <fullName evidence="1">Glycine cleavage system H protein</fullName>
    </recommendedName>
</protein>
<gene>
    <name evidence="1" type="primary">gcvH</name>
    <name type="ordered locus">NMB0575</name>
</gene>
<comment type="function">
    <text evidence="1">The glycine cleavage system catalyzes the degradation of glycine. The H protein shuttles the methylamine group of glycine from the P protein to the T protein.</text>
</comment>
<comment type="cofactor">
    <cofactor evidence="1">
        <name>(R)-lipoate</name>
        <dbReference type="ChEBI" id="CHEBI:83088"/>
    </cofactor>
    <text evidence="1">Binds 1 lipoyl cofactor covalently.</text>
</comment>
<comment type="subunit">
    <text evidence="1">The glycine cleavage system is composed of four proteins: P, T, L and H.</text>
</comment>
<comment type="similarity">
    <text evidence="1">Belongs to the GcvH family.</text>
</comment>
<name>GCSH_NEIMB</name>
<keyword id="KW-0450">Lipoyl</keyword>
<keyword id="KW-1185">Reference proteome</keyword>
<proteinExistence type="inferred from homology"/>
<reference key="1">
    <citation type="journal article" date="2000" name="Science">
        <title>Complete genome sequence of Neisseria meningitidis serogroup B strain MC58.</title>
        <authorList>
            <person name="Tettelin H."/>
            <person name="Saunders N.J."/>
            <person name="Heidelberg J.F."/>
            <person name="Jeffries A.C."/>
            <person name="Nelson K.E."/>
            <person name="Eisen J.A."/>
            <person name="Ketchum K.A."/>
            <person name="Hood D.W."/>
            <person name="Peden J.F."/>
            <person name="Dodson R.J."/>
            <person name="Nelson W.C."/>
            <person name="Gwinn M.L."/>
            <person name="DeBoy R.T."/>
            <person name="Peterson J.D."/>
            <person name="Hickey E.K."/>
            <person name="Haft D.H."/>
            <person name="Salzberg S.L."/>
            <person name="White O."/>
            <person name="Fleischmann R.D."/>
            <person name="Dougherty B.A."/>
            <person name="Mason T.M."/>
            <person name="Ciecko A."/>
            <person name="Parksey D.S."/>
            <person name="Blair E."/>
            <person name="Cittone H."/>
            <person name="Clark E.B."/>
            <person name="Cotton M.D."/>
            <person name="Utterback T.R."/>
            <person name="Khouri H.M."/>
            <person name="Qin H."/>
            <person name="Vamathevan J.J."/>
            <person name="Gill J."/>
            <person name="Scarlato V."/>
            <person name="Masignani V."/>
            <person name="Pizza M."/>
            <person name="Grandi G."/>
            <person name="Sun L."/>
            <person name="Smith H.O."/>
            <person name="Fraser C.M."/>
            <person name="Moxon E.R."/>
            <person name="Rappuoli R."/>
            <person name="Venter J.C."/>
        </authorList>
    </citation>
    <scope>NUCLEOTIDE SEQUENCE [LARGE SCALE GENOMIC DNA]</scope>
    <source>
        <strain>ATCC BAA-335 / MC58</strain>
    </source>
</reference>
<dbReference type="EMBL" id="AE002098">
    <property type="protein sequence ID" value="AAF41003.1"/>
    <property type="molecule type" value="Genomic_DNA"/>
</dbReference>
<dbReference type="PIR" id="B81183">
    <property type="entry name" value="B81183"/>
</dbReference>
<dbReference type="RefSeq" id="NP_273619.1">
    <property type="nucleotide sequence ID" value="NC_003112.2"/>
</dbReference>
<dbReference type="RefSeq" id="WP_002222872.1">
    <property type="nucleotide sequence ID" value="NC_003112.2"/>
</dbReference>
<dbReference type="SMR" id="Q9K0L7"/>
<dbReference type="FunCoup" id="Q9K0L7">
    <property type="interactions" value="495"/>
</dbReference>
<dbReference type="STRING" id="122586.NMB0575"/>
<dbReference type="PaxDb" id="122586-NMB0575"/>
<dbReference type="KEGG" id="nme:NMB0575"/>
<dbReference type="PATRIC" id="fig|122586.8.peg.735"/>
<dbReference type="HOGENOM" id="CLU_097408_2_1_4"/>
<dbReference type="InParanoid" id="Q9K0L7"/>
<dbReference type="OrthoDB" id="9796712at2"/>
<dbReference type="Proteomes" id="UP000000425">
    <property type="component" value="Chromosome"/>
</dbReference>
<dbReference type="GO" id="GO:0005829">
    <property type="term" value="C:cytosol"/>
    <property type="evidence" value="ECO:0000318"/>
    <property type="project" value="GO_Central"/>
</dbReference>
<dbReference type="GO" id="GO:0005960">
    <property type="term" value="C:glycine cleavage complex"/>
    <property type="evidence" value="ECO:0007669"/>
    <property type="project" value="InterPro"/>
</dbReference>
<dbReference type="GO" id="GO:0019464">
    <property type="term" value="P:glycine decarboxylation via glycine cleavage system"/>
    <property type="evidence" value="ECO:0007669"/>
    <property type="project" value="UniProtKB-UniRule"/>
</dbReference>
<dbReference type="CDD" id="cd06848">
    <property type="entry name" value="GCS_H"/>
    <property type="match status" value="1"/>
</dbReference>
<dbReference type="Gene3D" id="2.40.50.100">
    <property type="match status" value="1"/>
</dbReference>
<dbReference type="HAMAP" id="MF_00272">
    <property type="entry name" value="GcvH"/>
    <property type="match status" value="1"/>
</dbReference>
<dbReference type="InterPro" id="IPR003016">
    <property type="entry name" value="2-oxoA_DH_lipoyl-BS"/>
</dbReference>
<dbReference type="InterPro" id="IPR000089">
    <property type="entry name" value="Biotin_lipoyl"/>
</dbReference>
<dbReference type="InterPro" id="IPR002930">
    <property type="entry name" value="GCV_H"/>
</dbReference>
<dbReference type="InterPro" id="IPR033753">
    <property type="entry name" value="GCV_H/Fam206"/>
</dbReference>
<dbReference type="InterPro" id="IPR017453">
    <property type="entry name" value="GCV_H_sub"/>
</dbReference>
<dbReference type="InterPro" id="IPR011053">
    <property type="entry name" value="Single_hybrid_motif"/>
</dbReference>
<dbReference type="NCBIfam" id="TIGR00527">
    <property type="entry name" value="gcvH"/>
    <property type="match status" value="1"/>
</dbReference>
<dbReference type="NCBIfam" id="NF002270">
    <property type="entry name" value="PRK01202.1"/>
    <property type="match status" value="1"/>
</dbReference>
<dbReference type="PANTHER" id="PTHR11715">
    <property type="entry name" value="GLYCINE CLEAVAGE SYSTEM H PROTEIN"/>
    <property type="match status" value="1"/>
</dbReference>
<dbReference type="PANTHER" id="PTHR11715:SF3">
    <property type="entry name" value="GLYCINE CLEAVAGE SYSTEM H PROTEIN-RELATED"/>
    <property type="match status" value="1"/>
</dbReference>
<dbReference type="Pfam" id="PF01597">
    <property type="entry name" value="GCV_H"/>
    <property type="match status" value="1"/>
</dbReference>
<dbReference type="SUPFAM" id="SSF51230">
    <property type="entry name" value="Single hybrid motif"/>
    <property type="match status" value="1"/>
</dbReference>
<dbReference type="PROSITE" id="PS50968">
    <property type="entry name" value="BIOTINYL_LIPOYL"/>
    <property type="match status" value="1"/>
</dbReference>
<dbReference type="PROSITE" id="PS00189">
    <property type="entry name" value="LIPOYL"/>
    <property type="match status" value="1"/>
</dbReference>
<feature type="chain" id="PRO_0000166230" description="Glycine cleavage system H protein">
    <location>
        <begin position="1"/>
        <end position="128"/>
    </location>
</feature>
<feature type="domain" description="Lipoyl-binding" evidence="2">
    <location>
        <begin position="25"/>
        <end position="107"/>
    </location>
</feature>
<feature type="modified residue" description="N6-lipoyllysine" evidence="1">
    <location>
        <position position="66"/>
    </location>
</feature>